<sequence length="650" mass="70340">MFTFLKIILWLFSLALASAININDITFSNLEITPLTANKQPDQGWTATFDFSIADASSIREGDEFTLSMPHVYRIKLLNSSQTATISLADGTEAFKCYVSQQAAYLYENTTFTCTAQNDLSSYNTIDGSITFSLNFSDGGSSYEYELENAKFFKSGPMLVKLGNQMSDVVNFDPAAFTENVFHSGRSTGYGSFESYHLGMYCPNGYFLGGTEKIDYDSSNNNVDLDCSSVQVYSSNDFNDWWFPQSYNDTNADVTCFGSNLWITLDEKLYDGEMLWVNALQSLPANVNTIDHALEFQYTCLDTIANTTYATQFSTTREFIVYQGRNLGTASAKSSFISTTTTDLTSINTSAYSTGSISTVETGNRTTSEVISHVVTTSTKLSPTATTSLTIAQTSIYSTDSNITVGTDIHTTSEVISDVETISRETASTVVAAPTSTTGWTGAMNTYISQFTSSSFATINSTPIISSSAVFETSDASIVNVHTENITNTAAVPSEEPTFVNATRNSLNSFCSSKQPSSPSSYTSSPLVSSLSVSKTLLSTSFTPSVPTSNTYIKTKNTGYFEHTALTTSSVGLNSFSETAVSSQGTKIDTFLVSSLIAYPSSASGSQLSGIQQNFTSTSLMISTYEGKASIFFSAELGSIIFLLLSYLLF</sequence>
<feature type="signal peptide">
    <location>
        <begin position="1"/>
        <end position="19"/>
    </location>
</feature>
<feature type="chain" id="PRO_0000022265" description="Alpha-agglutinin">
    <location>
        <begin position="20"/>
        <end position="627"/>
    </location>
</feature>
<feature type="propeptide" id="PRO_0000022266" description="Removed in mature form" evidence="1">
    <location>
        <begin position="628"/>
        <end position="650"/>
    </location>
</feature>
<feature type="repeat" description="1">
    <location>
        <begin position="339"/>
        <end position="378"/>
    </location>
</feature>
<feature type="repeat" description="2">
    <location>
        <begin position="384"/>
        <end position="423"/>
    </location>
</feature>
<feature type="region of interest" description="Ig-like fold domain important for alpha-agglutinin activity, contributing to a functional binding site for a-agglutinin">
    <location>
        <begin position="216"/>
        <end position="322"/>
    </location>
</feature>
<feature type="region of interest" description="2 X 40 AA tandem repeats">
    <location>
        <begin position="339"/>
        <end position="423"/>
    </location>
</feature>
<feature type="site" description="Not glycosylated" evidence="3">
    <location>
        <position position="348"/>
    </location>
</feature>
<feature type="lipid moiety-binding region" description="GPI-anchor amidated glycine" evidence="1">
    <location>
        <position position="627"/>
    </location>
</feature>
<feature type="glycosylation site" description="N-linked (GlcNAc...) asparagine" evidence="1">
    <location>
        <position position="79"/>
    </location>
</feature>
<feature type="glycosylation site" description="N-linked (GlcNAc...) asparagine" evidence="1">
    <location>
        <position position="109"/>
    </location>
</feature>
<feature type="glycosylation site" description="N-linked (GlcNAc...) asparagine" evidence="1">
    <location>
        <position position="135"/>
    </location>
</feature>
<feature type="glycosylation site" description="N-linked (GlcNAc...) asparagine" evidence="3">
    <location>
        <position position="248"/>
    </location>
</feature>
<feature type="glycosylation site" description="O-linked (Man...) serine" evidence="3">
    <location>
        <position position="282"/>
    </location>
</feature>
<feature type="glycosylation site" description="O-linked (Man...) threonine" evidence="3">
    <location>
        <position position="289"/>
    </location>
</feature>
<feature type="glycosylation site" description="O-linked (Man...) threonine" evidence="3">
    <location>
        <position position="299"/>
    </location>
</feature>
<feature type="glycosylation site" description="O-linked (Man...) threonine" evidence="3">
    <location>
        <position position="303"/>
    </location>
</feature>
<feature type="glycosylation site" description="N-linked (GlcNAc...) asparagine" evidence="3">
    <location>
        <position position="306"/>
    </location>
</feature>
<feature type="glycosylation site" description="O-linked (Man...) threonine" evidence="3">
    <location>
        <position position="307"/>
    </location>
</feature>
<feature type="glycosylation site" description="O-linked (Man...) threonine" evidence="3">
    <location>
        <position position="308"/>
    </location>
</feature>
<feature type="glycosylation site" description="O-linked (Man...) threonine" evidence="3">
    <location>
        <position position="311"/>
    </location>
</feature>
<feature type="glycosylation site" description="O-linked (Man...) serine" evidence="3">
    <location>
        <position position="314"/>
    </location>
</feature>
<feature type="glycosylation site" description="O-linked (Man...) threonine" evidence="3">
    <location>
        <position position="315"/>
    </location>
</feature>
<feature type="glycosylation site" description="O-linked (Man...) threonine" evidence="3">
    <location>
        <position position="316"/>
    </location>
</feature>
<feature type="glycosylation site" description="O-linked (Man...) threonine" evidence="3">
    <location>
        <position position="329"/>
    </location>
</feature>
<feature type="glycosylation site" description="O-linked (Man...) serine" evidence="3">
    <location>
        <position position="331"/>
    </location>
</feature>
<feature type="glycosylation site" description="O-linked (Man...) serine" evidence="3">
    <location>
        <position position="334"/>
    </location>
</feature>
<feature type="glycosylation site" description="O-linked (Man...) serine" evidence="3">
    <location>
        <position position="335"/>
    </location>
</feature>
<feature type="glycosylation site" description="O-linked (Man...) serine" evidence="3">
    <location>
        <position position="338"/>
    </location>
</feature>
<feature type="glycosylation site" description="O-linked (Man...) threonine" evidence="3">
    <location>
        <position position="339"/>
    </location>
</feature>
<feature type="glycosylation site" description="O-linked (Man...) threonine" evidence="3">
    <location>
        <position position="340"/>
    </location>
</feature>
<feature type="glycosylation site" description="O-linked (Man...) threonine" evidence="3">
    <location>
        <position position="341"/>
    </location>
</feature>
<feature type="glycosylation site" description="O-linked (Man...) threonine" evidence="3">
    <location>
        <position position="342"/>
    </location>
</feature>
<feature type="glycosylation site" description="O-linked (Man...) threonine" evidence="3">
    <location>
        <position position="345"/>
    </location>
</feature>
<feature type="glycosylation site" description="O-linked (Man...) serine" evidence="3">
    <location>
        <position position="346"/>
    </location>
</feature>
<feature type="glycosylation site" description="O-linked (Man...) threonine" evidence="3">
    <location>
        <position position="349"/>
    </location>
</feature>
<feature type="glycosylation site" description="O-linked (Man...) serine" evidence="3">
    <location>
        <position position="350"/>
    </location>
</feature>
<feature type="glycosylation site" description="N-linked (GlcNAc...) asparagine" evidence="1">
    <location>
        <position position="364"/>
    </location>
</feature>
<feature type="glycosylation site" description="N-linked (GlcNAc...) asparagine" evidence="1">
    <location>
        <position position="402"/>
    </location>
</feature>
<feature type="glycosylation site" description="N-linked (GlcNAc...) asparagine" evidence="1">
    <location>
        <position position="485"/>
    </location>
</feature>
<feature type="glycosylation site" description="N-linked (GlcNAc...) asparagine" evidence="1">
    <location>
        <position position="501"/>
    </location>
</feature>
<feature type="glycosylation site" description="N-linked (GlcNAc...) asparagine" evidence="1">
    <location>
        <position position="614"/>
    </location>
</feature>
<feature type="disulfide bond" evidence="3">
    <location>
        <begin position="97"/>
        <end position="114"/>
    </location>
</feature>
<feature type="disulfide bond" evidence="3">
    <location>
        <begin position="202"/>
        <end position="300"/>
    </location>
</feature>
<feature type="mutagenesis site" description="Little effect on secreted alpha-agglutinin activity.">
    <original>T</original>
    <variation>I</variation>
    <location>
        <position position="211"/>
    </location>
</feature>
<feature type="mutagenesis site" description="No effect on secreted alpha-agglutinin activity." evidence="5">
    <original>I</original>
    <variation>M</variation>
    <location>
        <position position="214"/>
    </location>
</feature>
<feature type="mutagenesis site" description="Little or no effect on secreted alpha-agglutinin activity." evidence="5">
    <original>D</original>
    <variation>A</variation>
    <variation>N</variation>
    <location>
        <position position="215"/>
    </location>
</feature>
<feature type="mutagenesis site" description="Complete loss of alpha-agglutinin activity." evidence="5">
    <original>Y</original>
    <variation>D</variation>
    <location>
        <position position="216"/>
    </location>
</feature>
<feature type="mutagenesis site" description="No effect on secreted alpha-agglutinin activity." evidence="5">
    <original>Y</original>
    <variation>F</variation>
    <location>
        <position position="216"/>
    </location>
</feature>
<feature type="mutagenesis site" description="Decreases secreted alpha-agglutinin activity by 100-fold." evidence="5">
    <original>Y</original>
    <variation>S</variation>
    <location>
        <position position="216"/>
    </location>
</feature>
<feature type="mutagenesis site" description="Decreases secreted alpha-agglutinin activity by 10-fold." evidence="5">
    <original>Y</original>
    <variation>V</variation>
    <location>
        <position position="216"/>
    </location>
</feature>
<feature type="mutagenesis site" description="Little effect on secreted alpha-agglutinin activity." evidence="5">
    <original>D</original>
    <variation>A</variation>
    <location>
        <position position="217"/>
    </location>
</feature>
<feature type="mutagenesis site" description="Decreases secreted alpha-agglutinin activity by 10-fold." evidence="5">
    <original>D</original>
    <variation>N</variation>
    <location>
        <position position="217"/>
    </location>
</feature>
<feature type="mutagenesis site" description="Decreases secreted alpha-agglutinin activity by less than 2-fold." evidence="5">
    <original>T</original>
    <variation>A</variation>
    <location>
        <position position="289"/>
    </location>
</feature>
<feature type="mutagenesis site" description="Decreases secreted alpha-agglutinin activity by less than 2-fold." evidence="5">
    <original>I</original>
    <variation>M</variation>
    <location>
        <position position="290"/>
    </location>
</feature>
<feature type="mutagenesis site" description="Decreases secreted alpha-agglutinin activity by 4-fold." evidence="5">
    <original>D</original>
    <variation>A</variation>
    <variation>N</variation>
    <location>
        <position position="291"/>
    </location>
</feature>
<feature type="mutagenesis site" description="Almost complete loss of secreted alpha-agglutinin activity." evidence="5">
    <original>H</original>
    <variation>L</variation>
    <variation>R</variation>
    <location>
        <position position="292"/>
    </location>
</feature>
<feature type="mutagenesis site" description="Decreases secreted alpha-agglutinin activity by more than 20-fold." evidence="5">
    <original>L</original>
    <variation>S</variation>
    <location>
        <position position="294"/>
    </location>
</feature>
<feature type="mutagenesis site" description="Decreases secreted alpha-agglutinin activity by 2-fold." evidence="5">
    <original>E</original>
    <variation>A</variation>
    <variation>Q</variation>
    <location>
        <position position="295"/>
    </location>
</feature>
<feature type="mutagenesis site" description="Decreases secreted alpha-agglutinin activity by more than 20-fold." evidence="5">
    <original>F</original>
    <variation>Y</variation>
    <location>
        <position position="296"/>
    </location>
</feature>
<feature type="mutagenesis site" description="Decreases secreted alpha-agglutinin activity by less than 2-fold." evidence="5">
    <original>Y</original>
    <variation>H</variation>
    <location>
        <position position="298"/>
    </location>
</feature>
<feature type="mutagenesis site" description="Decreases secreted alpha-agglutinin activity by 60-fold." evidence="5">
    <original>Y</original>
    <variation>A</variation>
    <location>
        <position position="322"/>
    </location>
</feature>
<feature type="mutagenesis site" description="Almost complete loss of secreted alpha-agglutinin activity by 10-fold." evidence="5">
    <original>Y</original>
    <variation>C</variation>
    <location>
        <position position="322"/>
    </location>
</feature>
<feature type="mutagenesis site" description="Decreases secreted alpha-agglutinin activity by 15-fold." evidence="5">
    <original>Y</original>
    <variation>F</variation>
    <location>
        <position position="322"/>
    </location>
</feature>
<feature type="mutagenesis site" description="Decreases secreted alpha-agglutinin activity by 2-fold." evidence="5">
    <original>Q</original>
    <variation>L</variation>
    <location>
        <position position="323"/>
    </location>
</feature>
<feature type="mutagenesis site" description="Little effect on secreted alpha-agglutinin activity." evidence="5">
    <original>G</original>
    <variation>A</variation>
    <location>
        <position position="324"/>
    </location>
</feature>
<feature type="mutagenesis site" description="Little effect on secreted alpha-agglutinin activity." evidence="5">
    <original>R</original>
    <variation>G</variation>
    <location>
        <position position="325"/>
    </location>
</feature>
<feature type="sequence conflict" description="In Ref. 1; AAA34417." evidence="6" ref="1">
    <original>S</original>
    <variation>P</variation>
    <location>
        <position position="449"/>
    </location>
</feature>
<feature type="sequence conflict" description="In Ref. 1; AAA34417." evidence="6" ref="1">
    <original>K</original>
    <variation>E</variation>
    <location>
        <position position="556"/>
    </location>
</feature>
<feature type="sequence conflict" description="In Ref. 1; AAA34417." evidence="6" ref="1">
    <original>V</original>
    <variation>L</variation>
    <location>
        <position position="581"/>
    </location>
</feature>
<comment type="function">
    <text evidence="5">Cell surface glycoprotein promoting cell-cell contact to facilitate mating. S.cerevisiae A and alpha cells express the complementary cell surface glycoproteins A-agglutinin and alpha-, respectively, which interact with one another to promote cellular aggregation during mating.</text>
</comment>
<comment type="subunit">
    <text evidence="2">Interacts with AGA2.</text>
</comment>
<comment type="subcellular location">
    <subcellularLocation>
        <location>Secreted</location>
        <location>Cell wall</location>
    </subcellularLocation>
    <subcellularLocation>
        <location>Membrane</location>
        <topology>Lipid-anchor</topology>
        <topology>GPI-anchor</topology>
    </subcellularLocation>
    <text>Covalently-linked GPI-modified cell wall protein (GPI-CWP).</text>
</comment>
<comment type="induction">
    <text>By exposition to pheromone (A-factor) secreted by the opposite mating type cells (type A).</text>
</comment>
<comment type="PTM">
    <text evidence="3 4">N-glycosylated, and O-glycosylated by both PMT1 and PMT2.</text>
</comment>
<comment type="PTM">
    <text>The GPI-anchor is attached to the protein in the endoplasmic reticulum and serves to target the protein to the cell surface. There, the glucosamine-inositol phospholipid moiety is cleaved off and the GPI-modified mannoprotein is covalently attached via its lipidless GPI glycan remnant to the 1,6-beta-glucan of the outer cell wall layer.</text>
</comment>
<comment type="similarity">
    <text evidence="6">To C.albicans ALS1.</text>
</comment>
<comment type="online information" name="Functional Glycomics Gateway - Glycan Binding">
    <link uri="http://www.functionalglycomics.org/glycomics/GBPServlet?&amp;operationType=view&amp;cbpId=cbp_oth_other_801"/>
    <text>Alpha-agglutinin</text>
</comment>
<gene>
    <name type="primary">SAG1</name>
    <name type="synonym">AGAL1</name>
    <name type="ordered locus">YJR004C</name>
    <name type="ORF">J1418</name>
</gene>
<protein>
    <recommendedName>
        <fullName>Alpha-agglutinin</fullName>
    </recommendedName>
    <alternativeName>
        <fullName>AG-alpha-1</fullName>
    </alternativeName>
</protein>
<accession>P20840</accession>
<accession>D6VWH8</accession>
<keyword id="KW-0130">Cell adhesion</keyword>
<keyword id="KW-0134">Cell wall</keyword>
<keyword id="KW-0903">Direct protein sequencing</keyword>
<keyword id="KW-1015">Disulfide bond</keyword>
<keyword id="KW-0325">Glycoprotein</keyword>
<keyword id="KW-0336">GPI-anchor</keyword>
<keyword id="KW-0449">Lipoprotein</keyword>
<keyword id="KW-0472">Membrane</keyword>
<keyword id="KW-1185">Reference proteome</keyword>
<keyword id="KW-0677">Repeat</keyword>
<keyword id="KW-0964">Secreted</keyword>
<keyword id="KW-0732">Signal</keyword>
<proteinExistence type="evidence at protein level"/>
<name>SAG1_YEAST</name>
<dbReference type="EMBL" id="X16861">
    <property type="protein sequence ID" value="CAA34752.1"/>
    <property type="molecule type" value="Genomic_DNA"/>
</dbReference>
<dbReference type="EMBL" id="M28164">
    <property type="protein sequence ID" value="AAA34417.1"/>
    <property type="molecule type" value="Genomic_DNA"/>
</dbReference>
<dbReference type="EMBL" id="X87611">
    <property type="protein sequence ID" value="CAA60926.1"/>
    <property type="molecule type" value="Genomic_DNA"/>
</dbReference>
<dbReference type="EMBL" id="Z49504">
    <property type="protein sequence ID" value="CAA89526.1"/>
    <property type="molecule type" value="Genomic_DNA"/>
</dbReference>
<dbReference type="EMBL" id="BK006943">
    <property type="protein sequence ID" value="DAA08794.1"/>
    <property type="molecule type" value="Genomic_DNA"/>
</dbReference>
<dbReference type="PIR" id="S22835">
    <property type="entry name" value="S22835"/>
</dbReference>
<dbReference type="RefSeq" id="NP_012537.1">
    <property type="nucleotide sequence ID" value="NM_001181661.1"/>
</dbReference>
<dbReference type="SMR" id="P20840"/>
<dbReference type="BioGRID" id="33760">
    <property type="interactions" value="38"/>
</dbReference>
<dbReference type="DIP" id="DIP-5692N"/>
<dbReference type="FunCoup" id="P20840">
    <property type="interactions" value="63"/>
</dbReference>
<dbReference type="MINT" id="P20840"/>
<dbReference type="STRING" id="4932.YJR004C"/>
<dbReference type="GlyCosmos" id="P20840">
    <property type="glycosylation" value="33 sites, No reported glycans"/>
</dbReference>
<dbReference type="GlyGen" id="P20840">
    <property type="glycosylation" value="33 sites"/>
</dbReference>
<dbReference type="iPTMnet" id="P20840"/>
<dbReference type="PaxDb" id="4932-YJR004C"/>
<dbReference type="PeptideAtlas" id="P20840"/>
<dbReference type="EnsemblFungi" id="YJR004C_mRNA">
    <property type="protein sequence ID" value="YJR004C"/>
    <property type="gene ID" value="YJR004C"/>
</dbReference>
<dbReference type="GeneID" id="853460"/>
<dbReference type="KEGG" id="sce:YJR004C"/>
<dbReference type="AGR" id="SGD:S000003764"/>
<dbReference type="SGD" id="S000003764">
    <property type="gene designation" value="SAG1"/>
</dbReference>
<dbReference type="VEuPathDB" id="FungiDB:YJR004C"/>
<dbReference type="eggNOG" id="ENOG502RGCG">
    <property type="taxonomic scope" value="Eukaryota"/>
</dbReference>
<dbReference type="HOGENOM" id="CLU_019475_0_0_1"/>
<dbReference type="InParanoid" id="P20840"/>
<dbReference type="OMA" id="IIIHVET"/>
<dbReference type="OrthoDB" id="3981162at2759"/>
<dbReference type="BioCyc" id="YEAST:G3O-31650-MONOMER"/>
<dbReference type="BioGRID-ORCS" id="853460">
    <property type="hits" value="0 hits in 10 CRISPR screens"/>
</dbReference>
<dbReference type="PRO" id="PR:P20840"/>
<dbReference type="Proteomes" id="UP000002311">
    <property type="component" value="Chromosome X"/>
</dbReference>
<dbReference type="RNAct" id="P20840">
    <property type="molecule type" value="protein"/>
</dbReference>
<dbReference type="GO" id="GO:0071944">
    <property type="term" value="C:cell periphery"/>
    <property type="evidence" value="ECO:0007005"/>
    <property type="project" value="SGD"/>
</dbReference>
<dbReference type="GO" id="GO:0005576">
    <property type="term" value="C:extracellular region"/>
    <property type="evidence" value="ECO:0007669"/>
    <property type="project" value="UniProtKB-KW"/>
</dbReference>
<dbReference type="GO" id="GO:0009277">
    <property type="term" value="C:fungal-type cell wall"/>
    <property type="evidence" value="ECO:0000314"/>
    <property type="project" value="SGD"/>
</dbReference>
<dbReference type="GO" id="GO:0000324">
    <property type="term" value="C:fungal-type vacuole"/>
    <property type="evidence" value="ECO:0007005"/>
    <property type="project" value="SGD"/>
</dbReference>
<dbReference type="GO" id="GO:0098552">
    <property type="term" value="C:side of membrane"/>
    <property type="evidence" value="ECO:0007669"/>
    <property type="project" value="UniProtKB-KW"/>
</dbReference>
<dbReference type="GO" id="GO:0050839">
    <property type="term" value="F:cell adhesion molecule binding"/>
    <property type="evidence" value="ECO:0000315"/>
    <property type="project" value="SGD"/>
</dbReference>
<dbReference type="GO" id="GO:0000752">
    <property type="term" value="P:agglutination involved in conjugation with cellular fusion"/>
    <property type="evidence" value="ECO:0000315"/>
    <property type="project" value="SGD"/>
</dbReference>
<dbReference type="Gene3D" id="2.60.40.1280">
    <property type="match status" value="1"/>
</dbReference>
<dbReference type="Gene3D" id="2.60.40.2430">
    <property type="entry name" value="Agglutinin-like protein, N-terminal domain, N2 subdomain"/>
    <property type="match status" value="1"/>
</dbReference>
<dbReference type="InterPro" id="IPR008966">
    <property type="entry name" value="Adhesion_dom_sf"/>
</dbReference>
<dbReference type="InterPro" id="IPR024672">
    <property type="entry name" value="Agglutinin-like_N"/>
</dbReference>
<dbReference type="InterPro" id="IPR043063">
    <property type="entry name" value="Agglutinin-like_N_N2"/>
</dbReference>
<dbReference type="InterPro" id="IPR033504">
    <property type="entry name" value="ALS"/>
</dbReference>
<dbReference type="InterPro" id="IPR011252">
    <property type="entry name" value="Fibrogen-bd_dom1"/>
</dbReference>
<dbReference type="PANTHER" id="PTHR33793:SF2">
    <property type="entry name" value="AGGLUTININ-LIKE PROTEIN 6"/>
    <property type="match status" value="1"/>
</dbReference>
<dbReference type="PANTHER" id="PTHR33793">
    <property type="entry name" value="ALPHA-AGGLUTININ"/>
    <property type="match status" value="1"/>
</dbReference>
<dbReference type="Pfam" id="PF11766">
    <property type="entry name" value="Candida_ALS_N"/>
    <property type="match status" value="1"/>
</dbReference>
<dbReference type="SMART" id="SM01056">
    <property type="entry name" value="Candida_ALS_N"/>
    <property type="match status" value="1"/>
</dbReference>
<dbReference type="SUPFAM" id="SSF49401">
    <property type="entry name" value="Bacterial adhesins"/>
    <property type="match status" value="1"/>
</dbReference>
<reference key="1">
    <citation type="journal article" date="1989" name="FEBS Lett.">
        <title>Purification of the inducible alpha-agglutinin of S. cerevisiae and molecular cloning of the gene.</title>
        <authorList>
            <person name="Hauser K."/>
            <person name="Tanner W."/>
        </authorList>
    </citation>
    <scope>NUCLEOTIDE SEQUENCE [GENOMIC DNA]</scope>
    <source>
        <strain>ATCC 204508 / S288c</strain>
    </source>
</reference>
<reference key="2">
    <citation type="journal article" date="1989" name="Mol. Cell. Biol.">
        <title>AG alpha 1 is the structural gene for the Saccharomyces cerevisiae alpha-agglutinin, a cell surface glycoprotein involved in cell-cell interactions during mating.</title>
        <authorList>
            <person name="Lipke P.N."/>
            <person name="Wojciechowicz D."/>
            <person name="Kurjan J."/>
        </authorList>
    </citation>
    <scope>NUCLEOTIDE SEQUENCE [GENOMIC DNA]</scope>
</reference>
<reference key="3">
    <citation type="journal article" date="1996" name="EMBO J.">
        <title>Complete nucleotide sequence of Saccharomyces cerevisiae chromosome X.</title>
        <authorList>
            <person name="Galibert F."/>
            <person name="Alexandraki D."/>
            <person name="Baur A."/>
            <person name="Boles E."/>
            <person name="Chalwatzis N."/>
            <person name="Chuat J.-C."/>
            <person name="Coster F."/>
            <person name="Cziepluch C."/>
            <person name="de Haan M."/>
            <person name="Domdey H."/>
            <person name="Durand P."/>
            <person name="Entian K.-D."/>
            <person name="Gatius M."/>
            <person name="Goffeau A."/>
            <person name="Grivell L.A."/>
            <person name="Hennemann A."/>
            <person name="Herbert C.J."/>
            <person name="Heumann K."/>
            <person name="Hilger F."/>
            <person name="Hollenberg C.P."/>
            <person name="Huang M.-E."/>
            <person name="Jacq C."/>
            <person name="Jauniaux J.-C."/>
            <person name="Katsoulou C."/>
            <person name="Kirchrath L."/>
            <person name="Kleine K."/>
            <person name="Kordes E."/>
            <person name="Koetter P."/>
            <person name="Liebl S."/>
            <person name="Louis E.J."/>
            <person name="Manus V."/>
            <person name="Mewes H.-W."/>
            <person name="Miosga T."/>
            <person name="Obermaier B."/>
            <person name="Perea J."/>
            <person name="Pohl T.M."/>
            <person name="Portetelle D."/>
            <person name="Pujol A."/>
            <person name="Purnelle B."/>
            <person name="Ramezani Rad M."/>
            <person name="Rasmussen S.W."/>
            <person name="Rose M."/>
            <person name="Rossau R."/>
            <person name="Schaaff-Gerstenschlaeger I."/>
            <person name="Smits P.H.M."/>
            <person name="Scarcez T."/>
            <person name="Soriano N."/>
            <person name="To Van D."/>
            <person name="Tzermia M."/>
            <person name="Van Broekhoven A."/>
            <person name="Vandenbol M."/>
            <person name="Wedler H."/>
            <person name="von Wettstein D."/>
            <person name="Wambutt R."/>
            <person name="Zagulski M."/>
            <person name="Zollner A."/>
            <person name="Karpfinger-Hartl L."/>
        </authorList>
    </citation>
    <scope>NUCLEOTIDE SEQUENCE [LARGE SCALE GENOMIC DNA]</scope>
    <source>
        <strain>ATCC 204508 / S288c</strain>
    </source>
</reference>
<reference key="4">
    <citation type="journal article" date="2014" name="G3 (Bethesda)">
        <title>The reference genome sequence of Saccharomyces cerevisiae: Then and now.</title>
        <authorList>
            <person name="Engel S.R."/>
            <person name="Dietrich F.S."/>
            <person name="Fisk D.G."/>
            <person name="Binkley G."/>
            <person name="Balakrishnan R."/>
            <person name="Costanzo M.C."/>
            <person name="Dwight S.S."/>
            <person name="Hitz B.C."/>
            <person name="Karra K."/>
            <person name="Nash R.S."/>
            <person name="Weng S."/>
            <person name="Wong E.D."/>
            <person name="Lloyd P."/>
            <person name="Skrzypek M.S."/>
            <person name="Miyasato S.R."/>
            <person name="Simison M."/>
            <person name="Cherry J.M."/>
        </authorList>
    </citation>
    <scope>GENOME REANNOTATION</scope>
    <source>
        <strain>ATCC 204508 / S288c</strain>
    </source>
</reference>
<reference key="5">
    <citation type="journal article" date="1995" name="J. Biol. Chem.">
        <title>Structure of Saccharomyces cerevisiae alpha-agglutinin. Evidence for a yeast cell wall protein with multiple immunoglobulin-like domains with atypical disulfides.</title>
        <authorList>
            <person name="Chen M.-H."/>
            <person name="Shen Z.-M."/>
            <person name="Bobin S."/>
            <person name="Kahn P.C."/>
            <person name="Lipke P.N."/>
        </authorList>
    </citation>
    <scope>PARTIAL PROTEIN SEQUENCE</scope>
    <scope>GLYCOSYLATION AT ASN-248; SER-282; THR-289; THR-299; THR-303; ASN-306; THR-307; THR-308; THR-311; SER-314; THR-315; THR-316; THR-329; SER-331; SER-334; SER-335; SER-338; THR-339; THR-340; THR-341; THR-342; THR-345; SER-346; THR-349 AND SER-350</scope>
    <scope>LACK OF GLYCOSYLATION AT ASN-348</scope>
    <scope>DISULFIDE BONDS</scope>
</reference>
<reference key="6">
    <citation type="journal article" date="1993" name="Mol. Cell. Biol.">
        <title>Cell surface anchorage and ligand-binding domains of the Saccharomyces cerevisiae cell adhesion protein alpha-agglutinin, a member of the immunoglobulin superfamily.</title>
        <authorList>
            <person name="Wojciechowicz D."/>
            <person name="Lu C.F."/>
            <person name="Kurjan J."/>
            <person name="Lipke P.N."/>
        </authorList>
    </citation>
    <scope>GLYCOSYLATION</scope>
    <scope>GPI-ANCHOR</scope>
</reference>
<reference key="7">
    <citation type="journal article" date="1994" name="Mol. Cell. Biol.">
        <title>A pathway for cell wall anchorage of Saccharomyces cerevisiae alpha-agglutinin.</title>
        <authorList>
            <person name="Lu C.-F."/>
            <person name="Kurjan J."/>
            <person name="Lipke P.N."/>
        </authorList>
    </citation>
    <scope>SUBCELLULAR LOCATION</scope>
</reference>
<reference key="8">
    <citation type="journal article" date="1995" name="J. Cell Biol.">
        <title>Glycosyl phosphatidylinositol-dependent cross-linking of alpha-agglutinin and beta 1,6-glucan in the Saccharomyces cerevisiae cell wall.</title>
        <authorList>
            <person name="Lu C.-F."/>
            <person name="Montijn R.C."/>
            <person name="Brown J.L."/>
            <person name="Klis F."/>
            <person name="Kurjan J."/>
            <person name="Bussey H."/>
            <person name="Lipke P.N."/>
        </authorList>
    </citation>
    <scope>GPI-ANCHOR</scope>
    <scope>CROSS-LINKING TO CELL WALL</scope>
</reference>
<reference key="9">
    <citation type="journal article" date="1996" name="Mol. Biol. Cell">
        <title>Identification of a ligand-binding site in an immunoglobulin fold domain of the Saccharomyces cerevisiae adhesion protein alpha-agglutinin.</title>
        <authorList>
            <person name="de Nobel H."/>
            <person name="Lipke P.N."/>
            <person name="Kurjan J."/>
        </authorList>
    </citation>
    <scope>FUNCTION</scope>
    <scope>MUTAGENESIS OF ILE-214; ASP-215; TYR-216; ASP-217; THR-289; ILE-290; ASP-291; HIS-292; LEU-294; GLU-295; PHE-296; TYR-298; TYR-322; GLN-323; GLY-324 AND ARG-325</scope>
</reference>
<reference key="10">
    <citation type="journal article" date="1998" name="Mol. Gen. Genet.">
        <title>Screening for glycosylphosphatidylinositol (GPI)-dependent cell wall proteins in Saccharomyces cerevisiae.</title>
        <authorList>
            <person name="Hamada K."/>
            <person name="Fukuchi S."/>
            <person name="Arisawa M."/>
            <person name="Baba M."/>
            <person name="Kitada K."/>
        </authorList>
    </citation>
    <scope>SUBCELLULAR LOCATION</scope>
</reference>
<reference key="11">
    <citation type="journal article" date="2001" name="J. Bacteriol.">
        <title>Interaction of alpha-agglutinin and a-agglutinin, Saccharomyces cerevisiae sexual cell adhesion molecules.</title>
        <authorList>
            <person name="Zhao H."/>
            <person name="Shen Z.M."/>
            <person name="Kahn P.C."/>
            <person name="Lipke P.N."/>
        </authorList>
    </citation>
    <scope>INTERACTION WITH AGA2</scope>
</reference>
<evidence type="ECO:0000255" key="1"/>
<evidence type="ECO:0000269" key="2">
    <source>
    </source>
</evidence>
<evidence type="ECO:0000269" key="3">
    <source>
    </source>
</evidence>
<evidence type="ECO:0000269" key="4">
    <source>
    </source>
</evidence>
<evidence type="ECO:0000269" key="5">
    <source>
    </source>
</evidence>
<evidence type="ECO:0000305" key="6"/>
<organism>
    <name type="scientific">Saccharomyces cerevisiae (strain ATCC 204508 / S288c)</name>
    <name type="common">Baker's yeast</name>
    <dbReference type="NCBI Taxonomy" id="559292"/>
    <lineage>
        <taxon>Eukaryota</taxon>
        <taxon>Fungi</taxon>
        <taxon>Dikarya</taxon>
        <taxon>Ascomycota</taxon>
        <taxon>Saccharomycotina</taxon>
        <taxon>Saccharomycetes</taxon>
        <taxon>Saccharomycetales</taxon>
        <taxon>Saccharomycetaceae</taxon>
        <taxon>Saccharomyces</taxon>
    </lineage>
</organism>